<reference key="1">
    <citation type="submission" date="2006-12" db="EMBL/GenBank/DDBJ databases">
        <title>Complete sequence of Acidovorax avenae subsp. citrulli AAC00-1.</title>
        <authorList>
            <person name="Copeland A."/>
            <person name="Lucas S."/>
            <person name="Lapidus A."/>
            <person name="Barry K."/>
            <person name="Detter J.C."/>
            <person name="Glavina del Rio T."/>
            <person name="Dalin E."/>
            <person name="Tice H."/>
            <person name="Pitluck S."/>
            <person name="Kiss H."/>
            <person name="Brettin T."/>
            <person name="Bruce D."/>
            <person name="Han C."/>
            <person name="Tapia R."/>
            <person name="Gilna P."/>
            <person name="Schmutz J."/>
            <person name="Larimer F."/>
            <person name="Land M."/>
            <person name="Hauser L."/>
            <person name="Kyrpides N."/>
            <person name="Kim E."/>
            <person name="Stahl D."/>
            <person name="Richardson P."/>
        </authorList>
    </citation>
    <scope>NUCLEOTIDE SEQUENCE [LARGE SCALE GENOMIC DNA]</scope>
    <source>
        <strain>AAC00-1</strain>
    </source>
</reference>
<name>DTD_PARC0</name>
<accession>A1TUZ5</accession>
<gene>
    <name evidence="1" type="primary">dtd</name>
    <name type="ordered locus">Aave_4243</name>
</gene>
<dbReference type="EC" id="3.1.1.96" evidence="1"/>
<dbReference type="EMBL" id="CP000512">
    <property type="protein sequence ID" value="ABM34783.1"/>
    <property type="molecule type" value="Genomic_DNA"/>
</dbReference>
<dbReference type="RefSeq" id="WP_011797257.1">
    <property type="nucleotide sequence ID" value="NC_008752.1"/>
</dbReference>
<dbReference type="SMR" id="A1TUZ5"/>
<dbReference type="STRING" id="397945.Aave_4243"/>
<dbReference type="GeneID" id="79789213"/>
<dbReference type="KEGG" id="aav:Aave_4243"/>
<dbReference type="eggNOG" id="COG1490">
    <property type="taxonomic scope" value="Bacteria"/>
</dbReference>
<dbReference type="HOGENOM" id="CLU_076901_1_1_4"/>
<dbReference type="OrthoDB" id="9801395at2"/>
<dbReference type="Proteomes" id="UP000002596">
    <property type="component" value="Chromosome"/>
</dbReference>
<dbReference type="GO" id="GO:0005737">
    <property type="term" value="C:cytoplasm"/>
    <property type="evidence" value="ECO:0007669"/>
    <property type="project" value="UniProtKB-SubCell"/>
</dbReference>
<dbReference type="GO" id="GO:0051500">
    <property type="term" value="F:D-tyrosyl-tRNA(Tyr) deacylase activity"/>
    <property type="evidence" value="ECO:0007669"/>
    <property type="project" value="TreeGrafter"/>
</dbReference>
<dbReference type="GO" id="GO:0106026">
    <property type="term" value="F:Gly-tRNA(Ala) deacylase activity"/>
    <property type="evidence" value="ECO:0007669"/>
    <property type="project" value="UniProtKB-UniRule"/>
</dbReference>
<dbReference type="GO" id="GO:0043908">
    <property type="term" value="F:Ser(Gly)-tRNA(Ala) hydrolase activity"/>
    <property type="evidence" value="ECO:0007669"/>
    <property type="project" value="UniProtKB-UniRule"/>
</dbReference>
<dbReference type="GO" id="GO:0000049">
    <property type="term" value="F:tRNA binding"/>
    <property type="evidence" value="ECO:0007669"/>
    <property type="project" value="UniProtKB-UniRule"/>
</dbReference>
<dbReference type="GO" id="GO:0019478">
    <property type="term" value="P:D-amino acid catabolic process"/>
    <property type="evidence" value="ECO:0007669"/>
    <property type="project" value="UniProtKB-UniRule"/>
</dbReference>
<dbReference type="FunFam" id="3.50.80.10:FF:000001">
    <property type="entry name" value="D-aminoacyl-tRNA deacylase"/>
    <property type="match status" value="1"/>
</dbReference>
<dbReference type="Gene3D" id="3.50.80.10">
    <property type="entry name" value="D-tyrosyl-tRNA(Tyr) deacylase"/>
    <property type="match status" value="1"/>
</dbReference>
<dbReference type="HAMAP" id="MF_00518">
    <property type="entry name" value="Deacylase_Dtd"/>
    <property type="match status" value="1"/>
</dbReference>
<dbReference type="InterPro" id="IPR003732">
    <property type="entry name" value="Daa-tRNA_deacyls_DTD"/>
</dbReference>
<dbReference type="InterPro" id="IPR023509">
    <property type="entry name" value="DTD-like_sf"/>
</dbReference>
<dbReference type="NCBIfam" id="TIGR00256">
    <property type="entry name" value="D-aminoacyl-tRNA deacylase"/>
    <property type="match status" value="1"/>
</dbReference>
<dbReference type="PANTHER" id="PTHR10472:SF5">
    <property type="entry name" value="D-AMINOACYL-TRNA DEACYLASE 1"/>
    <property type="match status" value="1"/>
</dbReference>
<dbReference type="PANTHER" id="PTHR10472">
    <property type="entry name" value="D-TYROSYL-TRNA TYR DEACYLASE"/>
    <property type="match status" value="1"/>
</dbReference>
<dbReference type="Pfam" id="PF02580">
    <property type="entry name" value="Tyr_Deacylase"/>
    <property type="match status" value="1"/>
</dbReference>
<dbReference type="SUPFAM" id="SSF69500">
    <property type="entry name" value="DTD-like"/>
    <property type="match status" value="1"/>
</dbReference>
<keyword id="KW-0963">Cytoplasm</keyword>
<keyword id="KW-0378">Hydrolase</keyword>
<keyword id="KW-0694">RNA-binding</keyword>
<keyword id="KW-0820">tRNA-binding</keyword>
<comment type="function">
    <text evidence="1">An aminoacyl-tRNA editing enzyme that deacylates mischarged D-aminoacyl-tRNAs. Also deacylates mischarged glycyl-tRNA(Ala), protecting cells against glycine mischarging by AlaRS. Acts via tRNA-based rather than protein-based catalysis; rejects L-amino acids rather than detecting D-amino acids in the active site. By recycling D-aminoacyl-tRNA to D-amino acids and free tRNA molecules, this enzyme counteracts the toxicity associated with the formation of D-aminoacyl-tRNA entities in vivo and helps enforce protein L-homochirality.</text>
</comment>
<comment type="catalytic activity">
    <reaction evidence="1">
        <text>glycyl-tRNA(Ala) + H2O = tRNA(Ala) + glycine + H(+)</text>
        <dbReference type="Rhea" id="RHEA:53744"/>
        <dbReference type="Rhea" id="RHEA-COMP:9657"/>
        <dbReference type="Rhea" id="RHEA-COMP:13640"/>
        <dbReference type="ChEBI" id="CHEBI:15377"/>
        <dbReference type="ChEBI" id="CHEBI:15378"/>
        <dbReference type="ChEBI" id="CHEBI:57305"/>
        <dbReference type="ChEBI" id="CHEBI:78442"/>
        <dbReference type="ChEBI" id="CHEBI:78522"/>
        <dbReference type="EC" id="3.1.1.96"/>
    </reaction>
</comment>
<comment type="catalytic activity">
    <reaction evidence="1">
        <text>a D-aminoacyl-tRNA + H2O = a tRNA + a D-alpha-amino acid + H(+)</text>
        <dbReference type="Rhea" id="RHEA:13953"/>
        <dbReference type="Rhea" id="RHEA-COMP:10123"/>
        <dbReference type="Rhea" id="RHEA-COMP:10124"/>
        <dbReference type="ChEBI" id="CHEBI:15377"/>
        <dbReference type="ChEBI" id="CHEBI:15378"/>
        <dbReference type="ChEBI" id="CHEBI:59871"/>
        <dbReference type="ChEBI" id="CHEBI:78442"/>
        <dbReference type="ChEBI" id="CHEBI:79333"/>
        <dbReference type="EC" id="3.1.1.96"/>
    </reaction>
</comment>
<comment type="subunit">
    <text evidence="1">Homodimer.</text>
</comment>
<comment type="subcellular location">
    <subcellularLocation>
        <location evidence="1">Cytoplasm</location>
    </subcellularLocation>
</comment>
<comment type="domain">
    <text evidence="1">A Gly-cisPro motif from one monomer fits into the active site of the other monomer to allow specific chiral rejection of L-amino acids.</text>
</comment>
<comment type="similarity">
    <text evidence="1">Belongs to the DTD family.</text>
</comment>
<sequence>MMGLLQRVREARVEIDGETVGRIGPGLLVLVCAERGDTQAEADRLLDKLLRLRIFADEAGKMNRSVQDTGGGLLLVSQFTLAADTRGGNRPSFTQAAAPDDGRRLYDHFVARARALHPVVETGRFAAEMQVHLVNDGPVTIPLRIAPPGTVQNGP</sequence>
<evidence type="ECO:0000255" key="1">
    <source>
        <dbReference type="HAMAP-Rule" id="MF_00518"/>
    </source>
</evidence>
<proteinExistence type="inferred from homology"/>
<organism>
    <name type="scientific">Paracidovorax citrulli (strain AAC00-1)</name>
    <name type="common">Acidovorax citrulli</name>
    <dbReference type="NCBI Taxonomy" id="397945"/>
    <lineage>
        <taxon>Bacteria</taxon>
        <taxon>Pseudomonadati</taxon>
        <taxon>Pseudomonadota</taxon>
        <taxon>Betaproteobacteria</taxon>
        <taxon>Burkholderiales</taxon>
        <taxon>Comamonadaceae</taxon>
        <taxon>Paracidovorax</taxon>
    </lineage>
</organism>
<protein>
    <recommendedName>
        <fullName evidence="1">D-aminoacyl-tRNA deacylase</fullName>
        <shortName evidence="1">DTD</shortName>
        <ecNumber evidence="1">3.1.1.96</ecNumber>
    </recommendedName>
    <alternativeName>
        <fullName evidence="1">Gly-tRNA(Ala) deacylase</fullName>
    </alternativeName>
</protein>
<feature type="chain" id="PRO_1000050804" description="D-aminoacyl-tRNA deacylase">
    <location>
        <begin position="1"/>
        <end position="155"/>
    </location>
</feature>
<feature type="short sequence motif" description="Gly-cisPro motif, important for rejection of L-amino acids" evidence="1">
    <location>
        <begin position="137"/>
        <end position="138"/>
    </location>
</feature>